<accession>B6EJW7</accession>
<gene>
    <name evidence="1" type="primary">lpxB</name>
    <name type="ordered locus">VSAL_I2414</name>
</gene>
<keyword id="KW-0328">Glycosyltransferase</keyword>
<keyword id="KW-0441">Lipid A biosynthesis</keyword>
<keyword id="KW-0444">Lipid biosynthesis</keyword>
<keyword id="KW-0443">Lipid metabolism</keyword>
<keyword id="KW-0808">Transferase</keyword>
<evidence type="ECO:0000255" key="1">
    <source>
        <dbReference type="HAMAP-Rule" id="MF_00392"/>
    </source>
</evidence>
<organism>
    <name type="scientific">Aliivibrio salmonicida (strain LFI1238)</name>
    <name type="common">Vibrio salmonicida (strain LFI1238)</name>
    <dbReference type="NCBI Taxonomy" id="316275"/>
    <lineage>
        <taxon>Bacteria</taxon>
        <taxon>Pseudomonadati</taxon>
        <taxon>Pseudomonadota</taxon>
        <taxon>Gammaproteobacteria</taxon>
        <taxon>Vibrionales</taxon>
        <taxon>Vibrionaceae</taxon>
        <taxon>Aliivibrio</taxon>
    </lineage>
</organism>
<reference key="1">
    <citation type="journal article" date="2008" name="BMC Genomics">
        <title>The genome sequence of the fish pathogen Aliivibrio salmonicida strain LFI1238 shows extensive evidence of gene decay.</title>
        <authorList>
            <person name="Hjerde E."/>
            <person name="Lorentzen M.S."/>
            <person name="Holden M.T."/>
            <person name="Seeger K."/>
            <person name="Paulsen S."/>
            <person name="Bason N."/>
            <person name="Churcher C."/>
            <person name="Harris D."/>
            <person name="Norbertczak H."/>
            <person name="Quail M.A."/>
            <person name="Sanders S."/>
            <person name="Thurston S."/>
            <person name="Parkhill J."/>
            <person name="Willassen N.P."/>
            <person name="Thomson N.R."/>
        </authorList>
    </citation>
    <scope>NUCLEOTIDE SEQUENCE [LARGE SCALE GENOMIC DNA]</scope>
    <source>
        <strain>LFI1238</strain>
    </source>
</reference>
<proteinExistence type="inferred from homology"/>
<protein>
    <recommendedName>
        <fullName evidence="1">Lipid-A-disaccharide synthase</fullName>
        <ecNumber evidence="1">2.4.1.182</ecNumber>
    </recommendedName>
</protein>
<name>LPXB_ALISL</name>
<dbReference type="EC" id="2.4.1.182" evidence="1"/>
<dbReference type="EMBL" id="FM178379">
    <property type="protein sequence ID" value="CAQ80098.1"/>
    <property type="molecule type" value="Genomic_DNA"/>
</dbReference>
<dbReference type="RefSeq" id="WP_012550902.1">
    <property type="nucleotide sequence ID" value="NC_011312.1"/>
</dbReference>
<dbReference type="SMR" id="B6EJW7"/>
<dbReference type="CAZy" id="GT19">
    <property type="family name" value="Glycosyltransferase Family 19"/>
</dbReference>
<dbReference type="KEGG" id="vsa:VSAL_I2414"/>
<dbReference type="eggNOG" id="COG0763">
    <property type="taxonomic scope" value="Bacteria"/>
</dbReference>
<dbReference type="HOGENOM" id="CLU_036577_3_0_6"/>
<dbReference type="UniPathway" id="UPA00973"/>
<dbReference type="Proteomes" id="UP000001730">
    <property type="component" value="Chromosome 1"/>
</dbReference>
<dbReference type="GO" id="GO:0016020">
    <property type="term" value="C:membrane"/>
    <property type="evidence" value="ECO:0007669"/>
    <property type="project" value="GOC"/>
</dbReference>
<dbReference type="GO" id="GO:0008915">
    <property type="term" value="F:lipid-A-disaccharide synthase activity"/>
    <property type="evidence" value="ECO:0007669"/>
    <property type="project" value="UniProtKB-UniRule"/>
</dbReference>
<dbReference type="GO" id="GO:0005543">
    <property type="term" value="F:phospholipid binding"/>
    <property type="evidence" value="ECO:0007669"/>
    <property type="project" value="TreeGrafter"/>
</dbReference>
<dbReference type="GO" id="GO:0009245">
    <property type="term" value="P:lipid A biosynthetic process"/>
    <property type="evidence" value="ECO:0007669"/>
    <property type="project" value="UniProtKB-UniRule"/>
</dbReference>
<dbReference type="HAMAP" id="MF_00392">
    <property type="entry name" value="LpxB"/>
    <property type="match status" value="1"/>
</dbReference>
<dbReference type="InterPro" id="IPR003835">
    <property type="entry name" value="Glyco_trans_19"/>
</dbReference>
<dbReference type="NCBIfam" id="TIGR00215">
    <property type="entry name" value="lpxB"/>
    <property type="match status" value="1"/>
</dbReference>
<dbReference type="PANTHER" id="PTHR30372">
    <property type="entry name" value="LIPID-A-DISACCHARIDE SYNTHASE"/>
    <property type="match status" value="1"/>
</dbReference>
<dbReference type="PANTHER" id="PTHR30372:SF4">
    <property type="entry name" value="LIPID-A-DISACCHARIDE SYNTHASE, MITOCHONDRIAL-RELATED"/>
    <property type="match status" value="1"/>
</dbReference>
<dbReference type="Pfam" id="PF02684">
    <property type="entry name" value="LpxB"/>
    <property type="match status" value="1"/>
</dbReference>
<dbReference type="SUPFAM" id="SSF53756">
    <property type="entry name" value="UDP-Glycosyltransferase/glycogen phosphorylase"/>
    <property type="match status" value="1"/>
</dbReference>
<feature type="chain" id="PRO_1000191458" description="Lipid-A-disaccharide synthase">
    <location>
        <begin position="1"/>
        <end position="383"/>
    </location>
</feature>
<sequence length="383" mass="42929">MTKPLRIGIVAGELSGDTLGEGFIKSVKAQYPNAEFVGIGGPKMIAQGCESLFDMEELAVMGLVEVLGRLPRLLKVKAELVRYFSQNPPDVFIGIDAPDFNLRLEKTLKDSGIKTVHYVSPSVWAWRPKRIFKIDAATDLVLAFLPFEKVFYDKYNVACEFIGHTLADAIPMQSDKIAARKLLGLELDRQWLAVLPGSRGGEVALIAKPFIETCQRIHQKHPNMGFVVAAVNEKRREQFEVIWKETAPELKFIIIQDTARNVMTAADSVLLASGTVALECMLIKRPMVVGYQVNKLTGWIAQKLSITEFVSLPNVLAGKELVQEFIQEECHPDFLYPAMEKVLSQDNSELIDRFTEMHQWIKKDADKQAANAVLRLINKETAE</sequence>
<comment type="function">
    <text evidence="1">Condensation of UDP-2,3-diacylglucosamine and 2,3-diacylglucosamine-1-phosphate to form lipid A disaccharide, a precursor of lipid A, a phosphorylated glycolipid that anchors the lipopolysaccharide to the outer membrane of the cell.</text>
</comment>
<comment type="catalytic activity">
    <reaction evidence="1">
        <text>a lipid X + a UDP-2-N,3-O-bis[(3R)-3-hydroxyacyl]-alpha-D-glucosamine = a lipid A disaccharide + UDP + H(+)</text>
        <dbReference type="Rhea" id="RHEA:67828"/>
        <dbReference type="ChEBI" id="CHEBI:15378"/>
        <dbReference type="ChEBI" id="CHEBI:58223"/>
        <dbReference type="ChEBI" id="CHEBI:137748"/>
        <dbReference type="ChEBI" id="CHEBI:176338"/>
        <dbReference type="ChEBI" id="CHEBI:176343"/>
        <dbReference type="EC" id="2.4.1.182"/>
    </reaction>
</comment>
<comment type="pathway">
    <text evidence="1">Bacterial outer membrane biogenesis; LPS lipid A biosynthesis.</text>
</comment>
<comment type="similarity">
    <text evidence="1">Belongs to the LpxB family.</text>
</comment>